<proteinExistence type="inferred from homology"/>
<gene>
    <name evidence="1" type="primary">phnC2</name>
    <name type="ordered locus">rrnB0320</name>
</gene>
<evidence type="ECO:0000255" key="1">
    <source>
        <dbReference type="HAMAP-Rule" id="MF_01713"/>
    </source>
</evidence>
<evidence type="ECO:0000256" key="2">
    <source>
        <dbReference type="SAM" id="MobiDB-lite"/>
    </source>
</evidence>
<keyword id="KW-0067">ATP-binding</keyword>
<keyword id="KW-1003">Cell membrane</keyword>
<keyword id="KW-0472">Membrane</keyword>
<keyword id="KW-0547">Nucleotide-binding</keyword>
<keyword id="KW-0918">Phosphonate transport</keyword>
<keyword id="KW-1185">Reference proteome</keyword>
<keyword id="KW-1278">Translocase</keyword>
<keyword id="KW-0813">Transport</keyword>
<accession>Q5UW69</accession>
<comment type="function">
    <text evidence="1">Part of the ABC transporter complex PhnCDE involved in phosphonates import. Responsible for energy coupling to the transport system.</text>
</comment>
<comment type="catalytic activity">
    <reaction evidence="1">
        <text>phosphonate(out) + ATP + H2O = phosphonate(in) + ADP + phosphate + H(+)</text>
        <dbReference type="Rhea" id="RHEA:18065"/>
        <dbReference type="ChEBI" id="CHEBI:15377"/>
        <dbReference type="ChEBI" id="CHEBI:15378"/>
        <dbReference type="ChEBI" id="CHEBI:16215"/>
        <dbReference type="ChEBI" id="CHEBI:30616"/>
        <dbReference type="ChEBI" id="CHEBI:43474"/>
        <dbReference type="ChEBI" id="CHEBI:456216"/>
        <dbReference type="EC" id="7.3.2.2"/>
    </reaction>
</comment>
<comment type="subunit">
    <text evidence="1">The complex is composed of two ATP-binding proteins (PhnC), two transmembrane proteins (PhnE) and a solute-binding protein (PhnD).</text>
</comment>
<comment type="subcellular location">
    <subcellularLocation>
        <location evidence="1">Cell membrane</location>
        <topology evidence="1">Peripheral membrane protein</topology>
    </subcellularLocation>
</comment>
<comment type="similarity">
    <text evidence="1">Belongs to the ABC transporter superfamily. Phosphonates importer (TC 3.A.1.9.1) family.</text>
</comment>
<dbReference type="EC" id="7.3.2.2" evidence="1"/>
<dbReference type="EMBL" id="AY596298">
    <property type="protein sequence ID" value="AAV48484.1"/>
    <property type="molecule type" value="Genomic_DNA"/>
</dbReference>
<dbReference type="SMR" id="Q5UW69"/>
<dbReference type="STRING" id="272569.rrnB0320"/>
<dbReference type="PaxDb" id="272569-rrnB0320"/>
<dbReference type="EnsemblBacteria" id="AAV48484">
    <property type="protein sequence ID" value="AAV48484"/>
    <property type="gene ID" value="rrnB0320"/>
</dbReference>
<dbReference type="KEGG" id="hma:rrnB0320"/>
<dbReference type="PATRIC" id="fig|272569.17.peg.4313"/>
<dbReference type="eggNOG" id="arCOG00206">
    <property type="taxonomic scope" value="Archaea"/>
</dbReference>
<dbReference type="HOGENOM" id="CLU_000604_1_22_2"/>
<dbReference type="Proteomes" id="UP000001169">
    <property type="component" value="Chromosome II"/>
</dbReference>
<dbReference type="GO" id="GO:0005886">
    <property type="term" value="C:plasma membrane"/>
    <property type="evidence" value="ECO:0007669"/>
    <property type="project" value="UniProtKB-SubCell"/>
</dbReference>
<dbReference type="GO" id="GO:0015416">
    <property type="term" value="F:ABC-type phosphonate transporter activity"/>
    <property type="evidence" value="ECO:0007669"/>
    <property type="project" value="UniProtKB-EC"/>
</dbReference>
<dbReference type="GO" id="GO:0005524">
    <property type="term" value="F:ATP binding"/>
    <property type="evidence" value="ECO:0007669"/>
    <property type="project" value="UniProtKB-KW"/>
</dbReference>
<dbReference type="GO" id="GO:0016887">
    <property type="term" value="F:ATP hydrolysis activity"/>
    <property type="evidence" value="ECO:0007669"/>
    <property type="project" value="InterPro"/>
</dbReference>
<dbReference type="CDD" id="cd03256">
    <property type="entry name" value="ABC_PhnC_transporter"/>
    <property type="match status" value="1"/>
</dbReference>
<dbReference type="Gene3D" id="3.40.50.300">
    <property type="entry name" value="P-loop containing nucleotide triphosphate hydrolases"/>
    <property type="match status" value="1"/>
</dbReference>
<dbReference type="InterPro" id="IPR003593">
    <property type="entry name" value="AAA+_ATPase"/>
</dbReference>
<dbReference type="InterPro" id="IPR003439">
    <property type="entry name" value="ABC_transporter-like_ATP-bd"/>
</dbReference>
<dbReference type="InterPro" id="IPR017871">
    <property type="entry name" value="ABC_transporter-like_CS"/>
</dbReference>
<dbReference type="InterPro" id="IPR012693">
    <property type="entry name" value="ABC_transpr_PhnC"/>
</dbReference>
<dbReference type="InterPro" id="IPR050086">
    <property type="entry name" value="MetN_ABC_transporter-like"/>
</dbReference>
<dbReference type="InterPro" id="IPR027417">
    <property type="entry name" value="P-loop_NTPase"/>
</dbReference>
<dbReference type="NCBIfam" id="TIGR02315">
    <property type="entry name" value="ABC_phnC"/>
    <property type="match status" value="1"/>
</dbReference>
<dbReference type="PANTHER" id="PTHR43166">
    <property type="entry name" value="AMINO ACID IMPORT ATP-BINDING PROTEIN"/>
    <property type="match status" value="1"/>
</dbReference>
<dbReference type="PANTHER" id="PTHR43166:SF6">
    <property type="entry name" value="PHOSPHONATES IMPORT ATP-BINDING PROTEIN PHNC"/>
    <property type="match status" value="1"/>
</dbReference>
<dbReference type="Pfam" id="PF00005">
    <property type="entry name" value="ABC_tran"/>
    <property type="match status" value="1"/>
</dbReference>
<dbReference type="SMART" id="SM00382">
    <property type="entry name" value="AAA"/>
    <property type="match status" value="1"/>
</dbReference>
<dbReference type="SUPFAM" id="SSF52540">
    <property type="entry name" value="P-loop containing nucleoside triphosphate hydrolases"/>
    <property type="match status" value="1"/>
</dbReference>
<dbReference type="PROSITE" id="PS00211">
    <property type="entry name" value="ABC_TRANSPORTER_1"/>
    <property type="match status" value="1"/>
</dbReference>
<dbReference type="PROSITE" id="PS50893">
    <property type="entry name" value="ABC_TRANSPORTER_2"/>
    <property type="match status" value="1"/>
</dbReference>
<dbReference type="PROSITE" id="PS51249">
    <property type="entry name" value="PHNC"/>
    <property type="match status" value="1"/>
</dbReference>
<organism>
    <name type="scientific">Haloarcula marismortui (strain ATCC 43049 / DSM 3752 / JCM 8966 / VKM B-1809)</name>
    <name type="common">Halobacterium marismortui</name>
    <dbReference type="NCBI Taxonomy" id="272569"/>
    <lineage>
        <taxon>Archaea</taxon>
        <taxon>Methanobacteriati</taxon>
        <taxon>Methanobacteriota</taxon>
        <taxon>Stenosarchaea group</taxon>
        <taxon>Halobacteria</taxon>
        <taxon>Halobacteriales</taxon>
        <taxon>Haloarculaceae</taxon>
        <taxon>Haloarcula</taxon>
    </lineage>
</organism>
<sequence>MLTVDNLEKTYDSGDRALKGVSFEVSGNEIVAIIGPSGAGKSTLVRSINRLTEPTGGRISLDDTEVTGLEKSALRDVRRDMGMIFQEFNLVERLTVMENILSGRLGYLSTWNAFRRNFPPEDIRRAREILSRVNLEGVENNRADELSGGQRQRVGIARAVIQRPKILLADEPTSALDPDTSREVMSLLTDIAHEDDIPIIINIHEVDLAVDYADRIIGLSDGEIVFNGPPDDLDQAARDEIYRGGESIADREEPSAGNSTDADDVIAERGD</sequence>
<protein>
    <recommendedName>
        <fullName evidence="1">Phosphonates import ATP-binding protein PhnC 2</fullName>
        <ecNumber evidence="1">7.3.2.2</ecNumber>
    </recommendedName>
</protein>
<name>PHNC2_HALMA</name>
<feature type="chain" id="PRO_0000092742" description="Phosphonates import ATP-binding protein PhnC 2">
    <location>
        <begin position="1"/>
        <end position="271"/>
    </location>
</feature>
<feature type="domain" description="ABC transporter" evidence="1">
    <location>
        <begin position="2"/>
        <end position="246"/>
    </location>
</feature>
<feature type="region of interest" description="Disordered" evidence="2">
    <location>
        <begin position="243"/>
        <end position="271"/>
    </location>
</feature>
<feature type="compositionally biased region" description="Basic and acidic residues" evidence="2">
    <location>
        <begin position="243"/>
        <end position="254"/>
    </location>
</feature>
<feature type="binding site" evidence="1">
    <location>
        <begin position="35"/>
        <end position="42"/>
    </location>
    <ligand>
        <name>ATP</name>
        <dbReference type="ChEBI" id="CHEBI:30616"/>
    </ligand>
</feature>
<reference key="1">
    <citation type="journal article" date="2004" name="Genome Res.">
        <title>Genome sequence of Haloarcula marismortui: a halophilic archaeon from the Dead Sea.</title>
        <authorList>
            <person name="Baliga N.S."/>
            <person name="Bonneau R."/>
            <person name="Facciotti M.T."/>
            <person name="Pan M."/>
            <person name="Glusman G."/>
            <person name="Deutsch E.W."/>
            <person name="Shannon P."/>
            <person name="Chiu Y."/>
            <person name="Weng R.S."/>
            <person name="Gan R.R."/>
            <person name="Hung P."/>
            <person name="Date S.V."/>
            <person name="Marcotte E."/>
            <person name="Hood L."/>
            <person name="Ng W.V."/>
        </authorList>
    </citation>
    <scope>NUCLEOTIDE SEQUENCE [LARGE SCALE GENOMIC DNA]</scope>
    <source>
        <strain>ATCC 43049 / DSM 3752 / JCM 8966 / VKM B-1809</strain>
    </source>
</reference>